<name>RS7_PYRAB</name>
<feature type="chain" id="PRO_0000124407" description="Small ribosomal subunit protein uS7">
    <location>
        <begin position="1"/>
        <end position="215"/>
    </location>
</feature>
<feature type="helix" evidence="4">
    <location>
        <begin position="5"/>
        <end position="8"/>
    </location>
</feature>
<feature type="turn" evidence="4">
    <location>
        <begin position="18"/>
        <end position="20"/>
    </location>
</feature>
<feature type="turn" evidence="4">
    <location>
        <begin position="31"/>
        <end position="33"/>
    </location>
</feature>
<feature type="helix" evidence="4">
    <location>
        <begin position="34"/>
        <end position="36"/>
    </location>
</feature>
<feature type="strand" evidence="3">
    <location>
        <begin position="51"/>
        <end position="54"/>
    </location>
</feature>
<feature type="helix" evidence="4">
    <location>
        <begin position="57"/>
        <end position="60"/>
    </location>
</feature>
<feature type="helix" evidence="4">
    <location>
        <begin position="63"/>
        <end position="71"/>
    </location>
</feature>
<feature type="strand" evidence="4">
    <location>
        <begin position="75"/>
        <end position="81"/>
    </location>
</feature>
<feature type="strand" evidence="4">
    <location>
        <begin position="84"/>
        <end position="86"/>
    </location>
</feature>
<feature type="helix" evidence="4">
    <location>
        <begin position="89"/>
        <end position="91"/>
    </location>
</feature>
<feature type="helix" evidence="4">
    <location>
        <begin position="97"/>
        <end position="115"/>
    </location>
</feature>
<feature type="helix" evidence="4">
    <location>
        <begin position="119"/>
        <end position="130"/>
    </location>
</feature>
<feature type="strand" evidence="4">
    <location>
        <begin position="133"/>
        <end position="141"/>
    </location>
</feature>
<feature type="strand" evidence="4">
    <location>
        <begin position="144"/>
        <end position="152"/>
    </location>
</feature>
<feature type="helix" evidence="4">
    <location>
        <begin position="154"/>
        <end position="172"/>
    </location>
</feature>
<feature type="turn" evidence="4">
    <location>
        <begin position="173"/>
        <end position="175"/>
    </location>
</feature>
<feature type="strand" evidence="4">
    <location>
        <begin position="176"/>
        <end position="178"/>
    </location>
</feature>
<feature type="helix" evidence="4">
    <location>
        <begin position="180"/>
        <end position="192"/>
    </location>
</feature>
<feature type="helix" evidence="4">
    <location>
        <begin position="199"/>
        <end position="212"/>
    </location>
</feature>
<keyword id="KW-0002">3D-structure</keyword>
<keyword id="KW-0687">Ribonucleoprotein</keyword>
<keyword id="KW-0689">Ribosomal protein</keyword>
<keyword id="KW-0694">RNA-binding</keyword>
<keyword id="KW-0699">rRNA-binding</keyword>
<reference key="1">
    <citation type="journal article" date="2003" name="Mol. Microbiol.">
        <title>An integrated analysis of the genome of the hyperthermophilic archaeon Pyrococcus abyssi.</title>
        <authorList>
            <person name="Cohen G.N."/>
            <person name="Barbe V."/>
            <person name="Flament D."/>
            <person name="Galperin M."/>
            <person name="Heilig R."/>
            <person name="Lecompte O."/>
            <person name="Poch O."/>
            <person name="Prieur D."/>
            <person name="Querellou J."/>
            <person name="Ripp R."/>
            <person name="Thierry J.-C."/>
            <person name="Van der Oost J."/>
            <person name="Weissenbach J."/>
            <person name="Zivanovic Y."/>
            <person name="Forterre P."/>
        </authorList>
    </citation>
    <scope>NUCLEOTIDE SEQUENCE [LARGE SCALE GENOMIC DNA]</scope>
    <source>
        <strain>GE5 / Orsay</strain>
    </source>
</reference>
<reference key="2">
    <citation type="journal article" date="2012" name="Curr. Microbiol.">
        <title>Re-annotation of two hyperthermophilic archaea Pyrococcus abyssi GE5 and Pyrococcus furiosus DSM 3638.</title>
        <authorList>
            <person name="Gao J."/>
            <person name="Wang J."/>
        </authorList>
    </citation>
    <scope>GENOME REANNOTATION</scope>
    <source>
        <strain>GE5 / Orsay</strain>
    </source>
</reference>
<evidence type="ECO:0000255" key="1">
    <source>
        <dbReference type="HAMAP-Rule" id="MF_00480"/>
    </source>
</evidence>
<evidence type="ECO:0000305" key="2"/>
<evidence type="ECO:0007829" key="3">
    <source>
        <dbReference type="PDB" id="7ZAH"/>
    </source>
</evidence>
<evidence type="ECO:0007829" key="4">
    <source>
        <dbReference type="PDB" id="7ZHG"/>
    </source>
</evidence>
<organism>
    <name type="scientific">Pyrococcus abyssi (strain GE5 / Orsay)</name>
    <dbReference type="NCBI Taxonomy" id="272844"/>
    <lineage>
        <taxon>Archaea</taxon>
        <taxon>Methanobacteriati</taxon>
        <taxon>Methanobacteriota</taxon>
        <taxon>Thermococci</taxon>
        <taxon>Thermococcales</taxon>
        <taxon>Thermococcaceae</taxon>
        <taxon>Pyrococcus</taxon>
    </lineage>
</organism>
<protein>
    <recommendedName>
        <fullName evidence="1">Small ribosomal subunit protein uS7</fullName>
    </recommendedName>
    <alternativeName>
        <fullName evidence="2">30S ribosomal protein S7</fullName>
    </alternativeName>
</protein>
<gene>
    <name evidence="1" type="primary">rps7</name>
    <name type="ordered locus">PYRAB06200</name>
    <name type="ORF">PAB0428</name>
</gene>
<comment type="function">
    <text evidence="1">One of the primary rRNA binding proteins, it binds directly to 16S rRNA where it nucleates assembly of the head domain of the 30S subunit. Is located at the subunit interface close to the decoding center.</text>
</comment>
<comment type="subunit">
    <text evidence="1">Part of the 30S ribosomal subunit.</text>
</comment>
<comment type="similarity">
    <text evidence="1">Belongs to the universal ribosomal protein uS7 family.</text>
</comment>
<dbReference type="EMBL" id="AJ248284">
    <property type="protein sequence ID" value="CAB49542.1"/>
    <property type="molecule type" value="Genomic_DNA"/>
</dbReference>
<dbReference type="EMBL" id="HE613800">
    <property type="protein sequence ID" value="CCE70012.1"/>
    <property type="molecule type" value="Genomic_DNA"/>
</dbReference>
<dbReference type="PIR" id="G75182">
    <property type="entry name" value="G75182"/>
</dbReference>
<dbReference type="RefSeq" id="WP_010867744.1">
    <property type="nucleotide sequence ID" value="NC_000868.1"/>
</dbReference>
<dbReference type="PDB" id="6SW9">
    <property type="method" value="EM"/>
    <property type="resolution" value="4.20 A"/>
    <property type="chains" value="H=1-215"/>
</dbReference>
<dbReference type="PDB" id="6SWC">
    <property type="method" value="EM"/>
    <property type="resolution" value="3.30 A"/>
    <property type="chains" value="H=1-215"/>
</dbReference>
<dbReference type="PDB" id="6SWE">
    <property type="method" value="EM"/>
    <property type="resolution" value="3.10 A"/>
    <property type="chains" value="H=1-215"/>
</dbReference>
<dbReference type="PDB" id="7ZAG">
    <property type="method" value="EM"/>
    <property type="resolution" value="2.77 A"/>
    <property type="chains" value="H=1-215"/>
</dbReference>
<dbReference type="PDB" id="7ZAH">
    <property type="method" value="EM"/>
    <property type="resolution" value="2.70 A"/>
    <property type="chains" value="H=1-215"/>
</dbReference>
<dbReference type="PDB" id="7ZAI">
    <property type="method" value="EM"/>
    <property type="resolution" value="2.60 A"/>
    <property type="chains" value="H=1-215"/>
</dbReference>
<dbReference type="PDB" id="7ZHG">
    <property type="method" value="EM"/>
    <property type="resolution" value="2.25 A"/>
    <property type="chains" value="H=1-215"/>
</dbReference>
<dbReference type="PDBsum" id="6SW9"/>
<dbReference type="PDBsum" id="6SWC"/>
<dbReference type="PDBsum" id="6SWE"/>
<dbReference type="PDBsum" id="7ZAG"/>
<dbReference type="PDBsum" id="7ZAH"/>
<dbReference type="PDBsum" id="7ZAI"/>
<dbReference type="PDBsum" id="7ZHG"/>
<dbReference type="EMDB" id="EMD-10320"/>
<dbReference type="EMDB" id="EMD-10322"/>
<dbReference type="EMDB" id="EMD-10324"/>
<dbReference type="EMDB" id="EMD-14579"/>
<dbReference type="EMDB" id="EMD-14580"/>
<dbReference type="EMDB" id="EMD-14581"/>
<dbReference type="EMDB" id="EMD-14731"/>
<dbReference type="EMDB" id="EMD-8148"/>
<dbReference type="SMR" id="Q9V109"/>
<dbReference type="STRING" id="272844.PAB0428"/>
<dbReference type="KEGG" id="pab:PAB0428"/>
<dbReference type="PATRIC" id="fig|272844.11.peg.658"/>
<dbReference type="eggNOG" id="arCOG04254">
    <property type="taxonomic scope" value="Archaea"/>
</dbReference>
<dbReference type="HOGENOM" id="CLU_063975_0_0_2"/>
<dbReference type="OrthoDB" id="45346at2157"/>
<dbReference type="PhylomeDB" id="Q9V109"/>
<dbReference type="Proteomes" id="UP000000810">
    <property type="component" value="Chromosome"/>
</dbReference>
<dbReference type="Proteomes" id="UP000009139">
    <property type="component" value="Chromosome"/>
</dbReference>
<dbReference type="GO" id="GO:0015935">
    <property type="term" value="C:small ribosomal subunit"/>
    <property type="evidence" value="ECO:0007669"/>
    <property type="project" value="InterPro"/>
</dbReference>
<dbReference type="GO" id="GO:0019843">
    <property type="term" value="F:rRNA binding"/>
    <property type="evidence" value="ECO:0007669"/>
    <property type="project" value="UniProtKB-UniRule"/>
</dbReference>
<dbReference type="GO" id="GO:0003735">
    <property type="term" value="F:structural constituent of ribosome"/>
    <property type="evidence" value="ECO:0007669"/>
    <property type="project" value="InterPro"/>
</dbReference>
<dbReference type="GO" id="GO:0006412">
    <property type="term" value="P:translation"/>
    <property type="evidence" value="ECO:0007669"/>
    <property type="project" value="UniProtKB-UniRule"/>
</dbReference>
<dbReference type="CDD" id="cd14867">
    <property type="entry name" value="uS7_Eukaryote"/>
    <property type="match status" value="1"/>
</dbReference>
<dbReference type="Gene3D" id="1.10.455.10">
    <property type="entry name" value="Ribosomal protein S7 domain"/>
    <property type="match status" value="1"/>
</dbReference>
<dbReference type="HAMAP" id="MF_00480_A">
    <property type="entry name" value="Ribosomal_uS7_A"/>
    <property type="match status" value="1"/>
</dbReference>
<dbReference type="InterPro" id="IPR000235">
    <property type="entry name" value="Ribosomal_uS7"/>
</dbReference>
<dbReference type="InterPro" id="IPR026018">
    <property type="entry name" value="Ribosomal_uS7_arc"/>
</dbReference>
<dbReference type="InterPro" id="IPR023798">
    <property type="entry name" value="Ribosomal_uS7_dom"/>
</dbReference>
<dbReference type="InterPro" id="IPR036823">
    <property type="entry name" value="Ribosomal_uS7_dom_sf"/>
</dbReference>
<dbReference type="InterPro" id="IPR005716">
    <property type="entry name" value="Ribosomal_uS7_euk/arc"/>
</dbReference>
<dbReference type="NCBIfam" id="NF003106">
    <property type="entry name" value="PRK04027.1"/>
    <property type="match status" value="1"/>
</dbReference>
<dbReference type="NCBIfam" id="TIGR01028">
    <property type="entry name" value="uS7_euk_arch"/>
    <property type="match status" value="1"/>
</dbReference>
<dbReference type="PANTHER" id="PTHR11205">
    <property type="entry name" value="RIBOSOMAL PROTEIN S7"/>
    <property type="match status" value="1"/>
</dbReference>
<dbReference type="Pfam" id="PF00177">
    <property type="entry name" value="Ribosomal_S7"/>
    <property type="match status" value="1"/>
</dbReference>
<dbReference type="PIRSF" id="PIRSF002122">
    <property type="entry name" value="RPS7p_RPS7a_RPS5e_RPS7o"/>
    <property type="match status" value="1"/>
</dbReference>
<dbReference type="SUPFAM" id="SSF47973">
    <property type="entry name" value="Ribosomal protein S7"/>
    <property type="match status" value="1"/>
</dbReference>
<accession>Q9V109</accession>
<accession>G8ZJ85</accession>
<proteinExistence type="evidence at protein level"/>
<sequence>MAKPLSERFFIPHEIKVMGRWSTEDVEVRDPSLKPYINLEPRLLPHTHGRHAKKHFGKANVHIVERLINKIMRSGGSHYKVAGHFMRREHRSLNSKKVKAYEVVKEAFKIIEKRTGKNPIQVLVWAIENAAPREDTTSVMFGGIRYHVAVDISPMRRLDVALRNIALGASAKCYRTKMSFAEALAEEIILAANKDPKSYAYSKKLEIERIAESSR</sequence>